<keyword id="KW-1185">Reference proteome</keyword>
<feature type="chain" id="PRO_1000045722" description="Protein SlyX homolog">
    <location>
        <begin position="1"/>
        <end position="68"/>
    </location>
</feature>
<reference key="1">
    <citation type="journal article" date="2011" name="J. Bacteriol.">
        <title>Genome of Ochrobactrum anthropi ATCC 49188 T, a versatile opportunistic pathogen and symbiont of several eukaryotic hosts.</title>
        <authorList>
            <person name="Chain P.S."/>
            <person name="Lang D.M."/>
            <person name="Comerci D.J."/>
            <person name="Malfatti S.A."/>
            <person name="Vergez L.M."/>
            <person name="Shin M."/>
            <person name="Ugalde R.A."/>
            <person name="Garcia E."/>
            <person name="Tolmasky M.E."/>
        </authorList>
    </citation>
    <scope>NUCLEOTIDE SEQUENCE [LARGE SCALE GENOMIC DNA]</scope>
    <source>
        <strain>ATCC 49188 / DSM 6882 / CCUG 24695 / JCM 21032 / LMG 3331 / NBRC 15819 / NCTC 12168 / Alc 37</strain>
    </source>
</reference>
<accession>A6WYH7</accession>
<proteinExistence type="inferred from homology"/>
<gene>
    <name evidence="1" type="primary">slyX</name>
    <name type="ordered locus">Oant_1314</name>
</gene>
<protein>
    <recommendedName>
        <fullName evidence="1">Protein SlyX homolog</fullName>
    </recommendedName>
</protein>
<name>SLYX_BRUA4</name>
<organism>
    <name type="scientific">Brucella anthropi (strain ATCC 49188 / DSM 6882 / CCUG 24695 / JCM 21032 / LMG 3331 / NBRC 15819 / NCTC 12168 / Alc 37)</name>
    <name type="common">Ochrobactrum anthropi</name>
    <dbReference type="NCBI Taxonomy" id="439375"/>
    <lineage>
        <taxon>Bacteria</taxon>
        <taxon>Pseudomonadati</taxon>
        <taxon>Pseudomonadota</taxon>
        <taxon>Alphaproteobacteria</taxon>
        <taxon>Hyphomicrobiales</taxon>
        <taxon>Brucellaceae</taxon>
        <taxon>Brucella/Ochrobactrum group</taxon>
        <taxon>Brucella</taxon>
    </lineage>
</organism>
<sequence>MTPDQRLTELEIRVAEQEKTIDELSSVLAEQWKTIDRLSKKLGALTDRFLELEEQTAPDVPVTKPPHW</sequence>
<comment type="similarity">
    <text evidence="1">Belongs to the SlyX family.</text>
</comment>
<dbReference type="EMBL" id="CP000758">
    <property type="protein sequence ID" value="ABS14031.1"/>
    <property type="molecule type" value="Genomic_DNA"/>
</dbReference>
<dbReference type="RefSeq" id="WP_010659381.1">
    <property type="nucleotide sequence ID" value="NC_009667.1"/>
</dbReference>
<dbReference type="SMR" id="A6WYH7"/>
<dbReference type="STRING" id="439375.Oant_1314"/>
<dbReference type="KEGG" id="oan:Oant_1314"/>
<dbReference type="PATRIC" id="fig|439375.7.peg.1374"/>
<dbReference type="eggNOG" id="COG2900">
    <property type="taxonomic scope" value="Bacteria"/>
</dbReference>
<dbReference type="HOGENOM" id="CLU_180796_5_0_5"/>
<dbReference type="Proteomes" id="UP000002301">
    <property type="component" value="Chromosome 1"/>
</dbReference>
<dbReference type="Gene3D" id="1.20.5.300">
    <property type="match status" value="1"/>
</dbReference>
<dbReference type="HAMAP" id="MF_00715">
    <property type="entry name" value="SlyX"/>
    <property type="match status" value="1"/>
</dbReference>
<dbReference type="InterPro" id="IPR007236">
    <property type="entry name" value="SlyX"/>
</dbReference>
<dbReference type="NCBIfam" id="NF001962">
    <property type="entry name" value="PRK00736.1"/>
    <property type="match status" value="1"/>
</dbReference>
<dbReference type="PANTHER" id="PTHR36508">
    <property type="entry name" value="PROTEIN SLYX"/>
    <property type="match status" value="1"/>
</dbReference>
<dbReference type="PANTHER" id="PTHR36508:SF1">
    <property type="entry name" value="PROTEIN SLYX"/>
    <property type="match status" value="1"/>
</dbReference>
<dbReference type="Pfam" id="PF04102">
    <property type="entry name" value="SlyX"/>
    <property type="match status" value="1"/>
</dbReference>
<evidence type="ECO:0000255" key="1">
    <source>
        <dbReference type="HAMAP-Rule" id="MF_00715"/>
    </source>
</evidence>